<comment type="function">
    <text evidence="1">The UvrABC repair system catalyzes the recognition and processing of DNA lesions. UvrA is an ATPase and a DNA-binding protein. A damage recognition complex composed of 2 UvrA and 2 UvrB subunits scans DNA for abnormalities. When the presence of a lesion has been verified by UvrB, the UvrA molecules dissociate.</text>
</comment>
<comment type="subunit">
    <text evidence="1">Forms a heterotetramer with UvrB during the search for lesions.</text>
</comment>
<comment type="subcellular location">
    <subcellularLocation>
        <location evidence="1">Cytoplasm</location>
    </subcellularLocation>
</comment>
<comment type="similarity">
    <text evidence="1">Belongs to the ABC transporter superfamily. UvrA family.</text>
</comment>
<protein>
    <recommendedName>
        <fullName evidence="1">UvrABC system protein A</fullName>
        <shortName evidence="1">UvrA protein</shortName>
    </recommendedName>
    <alternativeName>
        <fullName evidence="1">Excinuclease ABC subunit A</fullName>
    </alternativeName>
</protein>
<reference key="1">
    <citation type="journal article" date="1995" name="Science">
        <title>Whole-genome random sequencing and assembly of Haemophilus influenzae Rd.</title>
        <authorList>
            <person name="Fleischmann R.D."/>
            <person name="Adams M.D."/>
            <person name="White O."/>
            <person name="Clayton R.A."/>
            <person name="Kirkness E.F."/>
            <person name="Kerlavage A.R."/>
            <person name="Bult C.J."/>
            <person name="Tomb J.-F."/>
            <person name="Dougherty B.A."/>
            <person name="Merrick J.M."/>
            <person name="McKenney K."/>
            <person name="Sutton G.G."/>
            <person name="FitzHugh W."/>
            <person name="Fields C.A."/>
            <person name="Gocayne J.D."/>
            <person name="Scott J.D."/>
            <person name="Shirley R."/>
            <person name="Liu L.-I."/>
            <person name="Glodek A."/>
            <person name="Kelley J.M."/>
            <person name="Weidman J.F."/>
            <person name="Phillips C.A."/>
            <person name="Spriggs T."/>
            <person name="Hedblom E."/>
            <person name="Cotton M.D."/>
            <person name="Utterback T.R."/>
            <person name="Hanna M.C."/>
            <person name="Nguyen D.T."/>
            <person name="Saudek D.M."/>
            <person name="Brandon R.C."/>
            <person name="Fine L.D."/>
            <person name="Fritchman J.L."/>
            <person name="Fuhrmann J.L."/>
            <person name="Geoghagen N.S.M."/>
            <person name="Gnehm C.L."/>
            <person name="McDonald L.A."/>
            <person name="Small K.V."/>
            <person name="Fraser C.M."/>
            <person name="Smith H.O."/>
            <person name="Venter J.C."/>
        </authorList>
    </citation>
    <scope>NUCLEOTIDE SEQUENCE [LARGE SCALE GENOMIC DNA]</scope>
    <source>
        <strain>ATCC 51907 / DSM 11121 / KW20 / Rd</strain>
    </source>
</reference>
<reference key="2">
    <citation type="journal article" date="1996" name="Gene">
        <title>Isolation and characterization of the Haemophilus influenzae uvrA gene.</title>
        <authorList>
            <person name="de la Morena M.L."/>
            <person name="Hendrixson D.R."/>
            <person name="St Geme J.W. III"/>
        </authorList>
    </citation>
    <scope>NUCLEOTIDE SEQUENCE [GENOMIC DNA]</scope>
    <source>
        <strain>NTHi N187</strain>
    </source>
</reference>
<reference key="3">
    <citation type="journal article" date="1994" name="Gene">
        <title>Cloning and sequencing of the Haemophilus influenzae ssb gene encoding single-strand DNA-binding protein.</title>
        <authorList>
            <person name="Jarosik G.P."/>
            <person name="Hansen E.J."/>
        </authorList>
    </citation>
    <scope>NUCLEOTIDE SEQUENCE [GENOMIC DNA] OF 1-71</scope>
    <source>
        <strain>NTHi TN106</strain>
    </source>
</reference>
<gene>
    <name evidence="1" type="primary">uvrA</name>
    <name type="ordered locus">HI_0249</name>
</gene>
<evidence type="ECO:0000255" key="1">
    <source>
        <dbReference type="HAMAP-Rule" id="MF_00205"/>
    </source>
</evidence>
<evidence type="ECO:0000305" key="2"/>
<organism>
    <name type="scientific">Haemophilus influenzae (strain ATCC 51907 / DSM 11121 / KW20 / Rd)</name>
    <dbReference type="NCBI Taxonomy" id="71421"/>
    <lineage>
        <taxon>Bacteria</taxon>
        <taxon>Pseudomonadati</taxon>
        <taxon>Pseudomonadota</taxon>
        <taxon>Gammaproteobacteria</taxon>
        <taxon>Pasteurellales</taxon>
        <taxon>Pasteurellaceae</taxon>
        <taxon>Haemophilus</taxon>
    </lineage>
</organism>
<feature type="chain" id="PRO_0000093053" description="UvrABC system protein A">
    <location>
        <begin position="1"/>
        <end position="943"/>
    </location>
</feature>
<feature type="domain" description="ABC transporter 1" evidence="1">
    <location>
        <begin position="310"/>
        <end position="587"/>
    </location>
</feature>
<feature type="domain" description="ABC transporter 2" evidence="1">
    <location>
        <begin position="607"/>
        <end position="937"/>
    </location>
</feature>
<feature type="zinc finger region" description="C4-type" evidence="1">
    <location>
        <begin position="253"/>
        <end position="280"/>
    </location>
</feature>
<feature type="zinc finger region" description="C4-type" evidence="1">
    <location>
        <begin position="740"/>
        <end position="766"/>
    </location>
</feature>
<feature type="binding site" evidence="1">
    <location>
        <begin position="31"/>
        <end position="38"/>
    </location>
    <ligand>
        <name>ATP</name>
        <dbReference type="ChEBI" id="CHEBI:30616"/>
    </ligand>
</feature>
<feature type="binding site" evidence="1">
    <location>
        <begin position="640"/>
        <end position="647"/>
    </location>
    <ligand>
        <name>ATP</name>
        <dbReference type="ChEBI" id="CHEBI:30616"/>
    </ligand>
</feature>
<feature type="sequence conflict" description="In Ref. 2; AAC44592." evidence="2" ref="2">
    <original>V</original>
    <variation>L</variation>
    <location>
        <position position="163"/>
    </location>
</feature>
<feature type="sequence conflict" description="In Ref. 2; AAC44592." evidence="2" ref="2">
    <original>E</original>
    <variation>D</variation>
    <location>
        <position position="236"/>
    </location>
</feature>
<feature type="sequence conflict" description="In Ref. 2; AAC44592." evidence="2" ref="2">
    <original>R</original>
    <variation>K</variation>
    <location>
        <position position="425"/>
    </location>
</feature>
<feature type="sequence conflict" description="In Ref. 2; AAC44592." evidence="2" ref="2">
    <original>I</original>
    <variation>M</variation>
    <location>
        <position position="463"/>
    </location>
</feature>
<feature type="sequence conflict" description="In Ref. 2; AAC44592." evidence="2" ref="2">
    <original>E</original>
    <variation>Q</variation>
    <location>
        <position position="514"/>
    </location>
</feature>
<feature type="sequence conflict" description="In Ref. 2; AAC44592." evidence="2" ref="2">
    <original>A</original>
    <variation>T</variation>
    <location>
        <position position="661"/>
    </location>
</feature>
<feature type="sequence conflict" description="In Ref. 2; AAC44592." evidence="2" ref="2">
    <original>T</original>
    <variation>E</variation>
    <location>
        <position position="928"/>
    </location>
</feature>
<feature type="sequence conflict" description="In Ref. 2; AAC44592." evidence="2" ref="2">
    <original>FLKPILEK</original>
    <variation>PL</variation>
    <location>
        <begin position="935"/>
        <end position="942"/>
    </location>
</feature>
<accession>P44410</accession>
<accession>Q48151</accession>
<keyword id="KW-0067">ATP-binding</keyword>
<keyword id="KW-0963">Cytoplasm</keyword>
<keyword id="KW-0227">DNA damage</keyword>
<keyword id="KW-0228">DNA excision</keyword>
<keyword id="KW-0234">DNA repair</keyword>
<keyword id="KW-0238">DNA-binding</keyword>
<keyword id="KW-0267">Excision nuclease</keyword>
<keyword id="KW-0479">Metal-binding</keyword>
<keyword id="KW-0547">Nucleotide-binding</keyword>
<keyword id="KW-1185">Reference proteome</keyword>
<keyword id="KW-0677">Repeat</keyword>
<keyword id="KW-0742">SOS response</keyword>
<keyword id="KW-0862">Zinc</keyword>
<keyword id="KW-0863">Zinc-finger</keyword>
<dbReference type="EMBL" id="L42023">
    <property type="protein sequence ID" value="AAC21915.1"/>
    <property type="molecule type" value="Genomic_DNA"/>
</dbReference>
<dbReference type="EMBL" id="U33877">
    <property type="protein sequence ID" value="AAC44592.1"/>
    <property type="molecule type" value="Genomic_DNA"/>
</dbReference>
<dbReference type="EMBL" id="U04997">
    <property type="protein sequence ID" value="AAA60462.1"/>
    <property type="molecule type" value="Genomic_DNA"/>
</dbReference>
<dbReference type="PIR" id="D64057">
    <property type="entry name" value="D64057"/>
</dbReference>
<dbReference type="RefSeq" id="NP_438418.1">
    <property type="nucleotide sequence ID" value="NC_000907.1"/>
</dbReference>
<dbReference type="SMR" id="P44410"/>
<dbReference type="STRING" id="71421.HI_0249"/>
<dbReference type="EnsemblBacteria" id="AAC21915">
    <property type="protein sequence ID" value="AAC21915"/>
    <property type="gene ID" value="HI_0249"/>
</dbReference>
<dbReference type="KEGG" id="hin:HI_0249"/>
<dbReference type="PATRIC" id="fig|71421.8.peg.264"/>
<dbReference type="eggNOG" id="COG0178">
    <property type="taxonomic scope" value="Bacteria"/>
</dbReference>
<dbReference type="HOGENOM" id="CLU_001370_0_2_6"/>
<dbReference type="OrthoDB" id="9809851at2"/>
<dbReference type="PhylomeDB" id="P44410"/>
<dbReference type="BioCyc" id="HINF71421:G1GJ1-263-MONOMER"/>
<dbReference type="Proteomes" id="UP000000579">
    <property type="component" value="Chromosome"/>
</dbReference>
<dbReference type="GO" id="GO:0005737">
    <property type="term" value="C:cytoplasm"/>
    <property type="evidence" value="ECO:0007669"/>
    <property type="project" value="UniProtKB-SubCell"/>
</dbReference>
<dbReference type="GO" id="GO:0009380">
    <property type="term" value="C:excinuclease repair complex"/>
    <property type="evidence" value="ECO:0007669"/>
    <property type="project" value="InterPro"/>
</dbReference>
<dbReference type="GO" id="GO:0005524">
    <property type="term" value="F:ATP binding"/>
    <property type="evidence" value="ECO:0007669"/>
    <property type="project" value="UniProtKB-UniRule"/>
</dbReference>
<dbReference type="GO" id="GO:0016887">
    <property type="term" value="F:ATP hydrolysis activity"/>
    <property type="evidence" value="ECO:0007669"/>
    <property type="project" value="InterPro"/>
</dbReference>
<dbReference type="GO" id="GO:0003677">
    <property type="term" value="F:DNA binding"/>
    <property type="evidence" value="ECO:0007669"/>
    <property type="project" value="UniProtKB-UniRule"/>
</dbReference>
<dbReference type="GO" id="GO:0009381">
    <property type="term" value="F:excinuclease ABC activity"/>
    <property type="evidence" value="ECO:0007669"/>
    <property type="project" value="UniProtKB-UniRule"/>
</dbReference>
<dbReference type="GO" id="GO:0008270">
    <property type="term" value="F:zinc ion binding"/>
    <property type="evidence" value="ECO:0007669"/>
    <property type="project" value="UniProtKB-UniRule"/>
</dbReference>
<dbReference type="GO" id="GO:0006289">
    <property type="term" value="P:nucleotide-excision repair"/>
    <property type="evidence" value="ECO:0007669"/>
    <property type="project" value="UniProtKB-UniRule"/>
</dbReference>
<dbReference type="GO" id="GO:0009432">
    <property type="term" value="P:SOS response"/>
    <property type="evidence" value="ECO:0007669"/>
    <property type="project" value="UniProtKB-UniRule"/>
</dbReference>
<dbReference type="CDD" id="cd03270">
    <property type="entry name" value="ABC_UvrA_I"/>
    <property type="match status" value="1"/>
</dbReference>
<dbReference type="CDD" id="cd03271">
    <property type="entry name" value="ABC_UvrA_II"/>
    <property type="match status" value="1"/>
</dbReference>
<dbReference type="FunFam" id="1.10.8.280:FF:000001">
    <property type="entry name" value="UvrABC system protein A"/>
    <property type="match status" value="1"/>
</dbReference>
<dbReference type="FunFam" id="1.20.1580.10:FF:000002">
    <property type="entry name" value="UvrABC system protein A"/>
    <property type="match status" value="1"/>
</dbReference>
<dbReference type="FunFam" id="1.20.1580.10:FF:000003">
    <property type="entry name" value="UvrABC system protein A"/>
    <property type="match status" value="1"/>
</dbReference>
<dbReference type="FunFam" id="3.30.190.20:FF:000003">
    <property type="entry name" value="UvrABC system protein A"/>
    <property type="match status" value="1"/>
</dbReference>
<dbReference type="Gene3D" id="3.30.190.20">
    <property type="match status" value="1"/>
</dbReference>
<dbReference type="Gene3D" id="1.10.8.280">
    <property type="entry name" value="ABC transporter ATPase domain-like"/>
    <property type="match status" value="1"/>
</dbReference>
<dbReference type="Gene3D" id="1.20.1580.10">
    <property type="entry name" value="ABC transporter ATPase like domain"/>
    <property type="match status" value="3"/>
</dbReference>
<dbReference type="Gene3D" id="3.40.50.300">
    <property type="entry name" value="P-loop containing nucleotide triphosphate hydrolases"/>
    <property type="match status" value="3"/>
</dbReference>
<dbReference type="HAMAP" id="MF_00205">
    <property type="entry name" value="UvrA"/>
    <property type="match status" value="1"/>
</dbReference>
<dbReference type="InterPro" id="IPR003439">
    <property type="entry name" value="ABC_transporter-like_ATP-bd"/>
</dbReference>
<dbReference type="InterPro" id="IPR017871">
    <property type="entry name" value="ABC_transporter-like_CS"/>
</dbReference>
<dbReference type="InterPro" id="IPR027417">
    <property type="entry name" value="P-loop_NTPase"/>
</dbReference>
<dbReference type="InterPro" id="IPR004602">
    <property type="entry name" value="UvrA"/>
</dbReference>
<dbReference type="InterPro" id="IPR041552">
    <property type="entry name" value="UvrA_DNA-bd"/>
</dbReference>
<dbReference type="InterPro" id="IPR041102">
    <property type="entry name" value="UvrA_inter"/>
</dbReference>
<dbReference type="NCBIfam" id="NF001503">
    <property type="entry name" value="PRK00349.1"/>
    <property type="match status" value="1"/>
</dbReference>
<dbReference type="NCBIfam" id="TIGR00630">
    <property type="entry name" value="uvra"/>
    <property type="match status" value="1"/>
</dbReference>
<dbReference type="PANTHER" id="PTHR43152">
    <property type="entry name" value="UVRABC SYSTEM PROTEIN A"/>
    <property type="match status" value="1"/>
</dbReference>
<dbReference type="PANTHER" id="PTHR43152:SF3">
    <property type="entry name" value="UVRABC SYSTEM PROTEIN A"/>
    <property type="match status" value="1"/>
</dbReference>
<dbReference type="Pfam" id="PF17755">
    <property type="entry name" value="UvrA_DNA-bind"/>
    <property type="match status" value="1"/>
</dbReference>
<dbReference type="Pfam" id="PF17760">
    <property type="entry name" value="UvrA_inter"/>
    <property type="match status" value="1"/>
</dbReference>
<dbReference type="SUPFAM" id="SSF52540">
    <property type="entry name" value="P-loop containing nucleoside triphosphate hydrolases"/>
    <property type="match status" value="2"/>
</dbReference>
<dbReference type="PROSITE" id="PS00211">
    <property type="entry name" value="ABC_TRANSPORTER_1"/>
    <property type="match status" value="2"/>
</dbReference>
<dbReference type="PROSITE" id="PS50893">
    <property type="entry name" value="ABC_TRANSPORTER_2"/>
    <property type="match status" value="2"/>
</dbReference>
<sequence>MENIDIRGARTHNLKNINLTIPRNKLVVITGLSGSGKSSLAFDTLYAEGQRRYVESLSAYARQFLSLMEKPDVDSIEGLSPAISIEQKSTSHNPRSTVGTITEIYDYLRLLFARVGEPRCPDHNVPLTAQTISQMVDKVLSLPEDSKMMLLAPVVKNRKGEHVKILENIAAQGYIRARIDGEICDLSDPPKLALQKKHTIEVVVDRFKVRSDLATRLAESFETALELSGGTAIVAEMDNPKAEELVFSANFACPHCGYSVPELEPRLFSFNNPAGACPTCDGLGVQQYFDEDRVVQNPTISLAGGAVKGWDRRNFYYYQMLTSLAKHYHFDVEAPYESLPKKIQHIIMHGSGKEEIEFQYMNDRGDVVIRKHPFEGILNNMARRYKETESMSVREELAKNISNRPCIDCGGSRLRPEARNVYIGRTNLPIIAEKSIGETLEFFTALSLTGQKAQIAEKILKEIRERLQFLVNVGLNYLSLSRSAETLSGGEAQRIRLASQIGAGLVGVMYVLDEPSIGLHQRDNERLLNTLIHLRNLGNTVIVVEHDEDAIRAADHIIDIGPGAGVHGGQVIAQGNADEIMLNPNSITGKFLSGADKIEIPKKRTALDKKKWLKLKGASGNNLKNVNLDIPVGLFTCVTGVSGSGKSTLINDTLFPLAQNALNRAEKTDYAPYQSIEGLEHFDKVIDINQSPIGRTPRSNPATYTGLFTPIRELFAGVPEARARGYNPGRFSFNVRGGRCEACQGDGVLKVEMHFLPDVYVPCDQCKGKRYNRETLEIRYKGKTIHQVLDMTVEEAREFFDAIPMIARKLQTLMDVGLSYIRLGQSSTTLSGGEAQRVKLATELSKRDTGKTLYILDEPTTGLHFADIKQLLEVLHRLRDQGNTIVVIEHNLDVIKTADWIVDLGPEGGSGGGQIIATGTPEQVAKVTSSHTARFLKPILEKP</sequence>
<proteinExistence type="inferred from homology"/>
<name>UVRA_HAEIN</name>